<dbReference type="GO" id="GO:0005576">
    <property type="term" value="C:extracellular region"/>
    <property type="evidence" value="ECO:0007669"/>
    <property type="project" value="UniProtKB-SubCell"/>
</dbReference>
<dbReference type="GO" id="GO:0042742">
    <property type="term" value="P:defense response to bacterium"/>
    <property type="evidence" value="ECO:0007669"/>
    <property type="project" value="UniProtKB-KW"/>
</dbReference>
<dbReference type="Gene3D" id="3.30.30.10">
    <property type="entry name" value="Knottin, scorpion toxin-like"/>
    <property type="match status" value="1"/>
</dbReference>
<dbReference type="InterPro" id="IPR001542">
    <property type="entry name" value="Defensin_invertebrate/fungal"/>
</dbReference>
<dbReference type="InterPro" id="IPR036574">
    <property type="entry name" value="Scorpion_toxin-like_sf"/>
</dbReference>
<dbReference type="Pfam" id="PF01097">
    <property type="entry name" value="Defensin_2"/>
    <property type="match status" value="1"/>
</dbReference>
<dbReference type="SUPFAM" id="SSF57095">
    <property type="entry name" value="Scorpion toxin-like"/>
    <property type="match status" value="1"/>
</dbReference>
<dbReference type="PROSITE" id="PS51378">
    <property type="entry name" value="INVERT_DEFENSINS"/>
    <property type="match status" value="1"/>
</dbReference>
<proteinExistence type="evidence at protein level"/>
<sequence>GFGCPNDYPCHRHCKSIPGRYGGYCGGXHRLRCTC</sequence>
<protein>
    <recommendedName>
        <fullName>Defensin-B</fullName>
    </recommendedName>
</protein>
<reference key="1">
    <citation type="journal article" date="1996" name="J. Biol. Chem.">
        <title>Innate immunity. Isolation of several cysteine-rich antimicrobial peptides from the blood of a mollusc, Mytilus edulis.</title>
        <authorList>
            <person name="Charlet M."/>
            <person name="Chernysh S."/>
            <person name="Philippe H."/>
            <person name="Hetru C."/>
            <person name="Hoffman J.A."/>
            <person name="Bulet P."/>
        </authorList>
    </citation>
    <scope>PROTEIN SEQUENCE</scope>
    <scope>CHARACTERIZATION</scope>
    <scope>MASS SPECTROMETRY</scope>
    <source>
        <tissue>Blood</tissue>
    </source>
</reference>
<accession>P81611</accession>
<evidence type="ECO:0000255" key="1">
    <source>
        <dbReference type="PROSITE-ProRule" id="PRU00710"/>
    </source>
</evidence>
<evidence type="ECO:0000269" key="2">
    <source>
    </source>
</evidence>
<organism>
    <name type="scientific">Mytilus edulis</name>
    <name type="common">Blue mussel</name>
    <dbReference type="NCBI Taxonomy" id="6550"/>
    <lineage>
        <taxon>Eukaryota</taxon>
        <taxon>Metazoa</taxon>
        <taxon>Spiralia</taxon>
        <taxon>Lophotrochozoa</taxon>
        <taxon>Mollusca</taxon>
        <taxon>Bivalvia</taxon>
        <taxon>Autobranchia</taxon>
        <taxon>Pteriomorphia</taxon>
        <taxon>Mytilida</taxon>
        <taxon>Mytiloidea</taxon>
        <taxon>Mytilidae</taxon>
        <taxon>Mytilinae</taxon>
        <taxon>Mytilus</taxon>
    </lineage>
</organism>
<feature type="chain" id="PRO_0000074478" description="Defensin-B">
    <location>
        <begin position="1"/>
        <end position="35" status="greater than"/>
    </location>
</feature>
<feature type="disulfide bond" evidence="1">
    <location>
        <begin position="4"/>
        <end position="25"/>
    </location>
</feature>
<feature type="disulfide bond" evidence="1">
    <location>
        <begin position="10"/>
        <end position="33"/>
    </location>
</feature>
<feature type="disulfide bond" evidence="1">
    <location>
        <begin position="14"/>
        <end position="35"/>
    </location>
</feature>
<feature type="non-terminal residue">
    <location>
        <position position="35"/>
    </location>
</feature>
<name>DEFB_MYTED</name>
<keyword id="KW-0044">Antibiotic</keyword>
<keyword id="KW-0929">Antimicrobial</keyword>
<keyword id="KW-0211">Defensin</keyword>
<keyword id="KW-0903">Direct protein sequencing</keyword>
<keyword id="KW-1015">Disulfide bond</keyword>
<keyword id="KW-0964">Secreted</keyword>
<comment type="function">
    <text>Has antibacterial activity against M.luteus and E.coli.</text>
</comment>
<comment type="subcellular location">
    <subcellularLocation>
        <location>Secreted</location>
    </subcellularLocation>
</comment>
<comment type="mass spectrometry"/>
<comment type="similarity">
    <text evidence="1">Belongs to the invertebrate defensin family. Type 2 subfamily.</text>
</comment>